<name>DHA_BACSU</name>
<protein>
    <recommendedName>
        <fullName evidence="8">Alanine dehydrogenase</fullName>
        <ecNumber evidence="5">1.4.1.1</ecNumber>
    </recommendedName>
    <alternativeName>
        <fullName evidence="9">Stage V sporulation protein N</fullName>
    </alternativeName>
</protein>
<accession>Q08352</accession>
<feature type="chain" id="PRO_0000198992" description="Alanine dehydrogenase">
    <location>
        <begin position="1"/>
        <end position="378"/>
    </location>
</feature>
<feature type="active site" description="Proton donor/acceptor" evidence="1">
    <location>
        <position position="95"/>
    </location>
</feature>
<feature type="active site" description="Proton donor/acceptor" evidence="1">
    <location>
        <position position="268"/>
    </location>
</feature>
<feature type="binding site" evidence="1">
    <location>
        <position position="15"/>
    </location>
    <ligand>
        <name>substrate</name>
    </ligand>
</feature>
<feature type="binding site" evidence="1">
    <location>
        <position position="74"/>
    </location>
    <ligand>
        <name>substrate</name>
    </ligand>
</feature>
<feature type="binding site" evidence="1">
    <location>
        <position position="132"/>
    </location>
    <ligand>
        <name>NAD(+)</name>
        <dbReference type="ChEBI" id="CHEBI:57540"/>
    </ligand>
</feature>
<feature type="binding site" evidence="1">
    <location>
        <begin position="176"/>
        <end position="177"/>
    </location>
    <ligand>
        <name>NAD(+)</name>
        <dbReference type="ChEBI" id="CHEBI:57540"/>
    </ligand>
</feature>
<feature type="binding site" evidence="1">
    <location>
        <position position="196"/>
    </location>
    <ligand>
        <name>NAD(+)</name>
        <dbReference type="ChEBI" id="CHEBI:57540"/>
    </ligand>
</feature>
<feature type="binding site" evidence="1">
    <location>
        <position position="218"/>
    </location>
    <ligand>
        <name>NAD(+)</name>
        <dbReference type="ChEBI" id="CHEBI:57540"/>
    </ligand>
</feature>
<feature type="binding site" evidence="1">
    <location>
        <begin position="237"/>
        <end position="238"/>
    </location>
    <ligand>
        <name>NAD(+)</name>
        <dbReference type="ChEBI" id="CHEBI:57540"/>
    </ligand>
</feature>
<feature type="binding site" evidence="1">
    <location>
        <begin position="265"/>
        <end position="268"/>
    </location>
    <ligand>
        <name>NAD(+)</name>
        <dbReference type="ChEBI" id="CHEBI:57540"/>
    </ligand>
</feature>
<feature type="binding site" evidence="1">
    <location>
        <begin position="297"/>
        <end position="300"/>
    </location>
    <ligand>
        <name>NAD(+)</name>
        <dbReference type="ChEBI" id="CHEBI:57540"/>
    </ligand>
</feature>
<proteinExistence type="evidence at protein level"/>
<comment type="function">
    <text evidence="5 6 7 11">Catalyzes the reversible oxidative deamination of L-alanine to pyruvate. Oxidative deamination proceeds through a sequential, ordered ternary-binary mechanism, where NAD(+) binds first followed by L-alanine; the products are released in the order ammonia, pyruvate and NADH (Probable) (PubMed:6794611, PubMed:6794612). Disruption blocks sporulation probably in stage V; 20-30% sporulation can be restored if the media is supplemented with pyruvate, suggesting lack of pyruvate blocks sporulation. Thus it is a key factor in the assimilation of L-alanine as an energy source via the tricarboxylic acid cycle during sporulation (PubMed:8226620).</text>
</comment>
<comment type="catalytic activity">
    <reaction evidence="5 6">
        <text>L-alanine + NAD(+) + H2O = pyruvate + NH4(+) + NADH + H(+)</text>
        <dbReference type="Rhea" id="RHEA:18405"/>
        <dbReference type="ChEBI" id="CHEBI:15361"/>
        <dbReference type="ChEBI" id="CHEBI:15377"/>
        <dbReference type="ChEBI" id="CHEBI:15378"/>
        <dbReference type="ChEBI" id="CHEBI:28938"/>
        <dbReference type="ChEBI" id="CHEBI:57540"/>
        <dbReference type="ChEBI" id="CHEBI:57945"/>
        <dbReference type="ChEBI" id="CHEBI:57972"/>
        <dbReference type="EC" id="1.4.1.1"/>
    </reaction>
    <physiologicalReaction direction="left-to-right" evidence="5 6">
        <dbReference type="Rhea" id="RHEA:18406"/>
    </physiologicalReaction>
    <physiologicalReaction direction="right-to-left" evidence="5 6">
        <dbReference type="Rhea" id="RHEA:18407"/>
    </physiologicalReaction>
</comment>
<comment type="pathway">
    <text>Amino-acid degradation; L-alanine degradation via dehydrogenase pathway; NH(3) and pyruvate from L-alanine: step 1/1.</text>
</comment>
<comment type="subunit">
    <text evidence="3">Homohexamer. Trimer of dimer (By similarity).</text>
</comment>
<comment type="subcellular location">
    <subcellularLocation>
        <location evidence="2">Cytoplasm</location>
    </subcellularLocation>
</comment>
<comment type="induction">
    <text evidence="4 7">A monocistronic operon. Induced by L-alanine in minimal media. Constitutively expressed in rich medium, declines during sporulation. Induced early during sporulation on minimal medium by L-alanine. Affects its own expression (PubMed:8226620). Transcription activated by AdeR (PubMed:22797752).</text>
</comment>
<comment type="disruption phenotype">
    <text evidence="7">Strain cannot grow on L-alanine as a sole carbon source. Disruption of ald causes a sporulation defect, most likely in stage V.</text>
</comment>
<comment type="similarity">
    <text evidence="10">Belongs to the AlaDH/PNT family.</text>
</comment>
<reference key="1">
    <citation type="journal article" date="1993" name="J. Bacteriol.">
        <title>Alanine dehydrogenase (ald) is required for normal sporulation in Bacillus subtilis.</title>
        <authorList>
            <person name="Siranosian K.J."/>
            <person name="Ireton K."/>
            <person name="Grossman A.D."/>
        </authorList>
    </citation>
    <scope>NUCLEOTIDE SEQUENCE [GENOMIC DNA]</scope>
    <scope>FUNCTION</scope>
    <scope>FUNCTION IN SPORULATION</scope>
    <scope>INDUCTION</scope>
    <scope>DISRUPTION PHENOTYPE</scope>
    <source>
        <strain>168 / JH642</strain>
    </source>
</reference>
<reference key="2">
    <citation type="submission" date="1996-11" db="EMBL/GenBank/DDBJ databases">
        <title>Sequence of a DNA fragment of 12315 bp around ald at about 253 degrees of the genome of Bacillus subtilis.</title>
        <authorList>
            <person name="Oudega B."/>
            <person name="Vandenbol M."/>
            <person name="Koningstein G."/>
        </authorList>
    </citation>
    <scope>NUCLEOTIDE SEQUENCE [GENOMIC DNA]</scope>
    <source>
        <strain>168</strain>
    </source>
</reference>
<reference key="3">
    <citation type="journal article" date="1997" name="Nature">
        <title>The complete genome sequence of the Gram-positive bacterium Bacillus subtilis.</title>
        <authorList>
            <person name="Kunst F."/>
            <person name="Ogasawara N."/>
            <person name="Moszer I."/>
            <person name="Albertini A.M."/>
            <person name="Alloni G."/>
            <person name="Azevedo V."/>
            <person name="Bertero M.G."/>
            <person name="Bessieres P."/>
            <person name="Bolotin A."/>
            <person name="Borchert S."/>
            <person name="Borriss R."/>
            <person name="Boursier L."/>
            <person name="Brans A."/>
            <person name="Braun M."/>
            <person name="Brignell S.C."/>
            <person name="Bron S."/>
            <person name="Brouillet S."/>
            <person name="Bruschi C.V."/>
            <person name="Caldwell B."/>
            <person name="Capuano V."/>
            <person name="Carter N.M."/>
            <person name="Choi S.-K."/>
            <person name="Codani J.-J."/>
            <person name="Connerton I.F."/>
            <person name="Cummings N.J."/>
            <person name="Daniel R.A."/>
            <person name="Denizot F."/>
            <person name="Devine K.M."/>
            <person name="Duesterhoeft A."/>
            <person name="Ehrlich S.D."/>
            <person name="Emmerson P.T."/>
            <person name="Entian K.-D."/>
            <person name="Errington J."/>
            <person name="Fabret C."/>
            <person name="Ferrari E."/>
            <person name="Foulger D."/>
            <person name="Fritz C."/>
            <person name="Fujita M."/>
            <person name="Fujita Y."/>
            <person name="Fuma S."/>
            <person name="Galizzi A."/>
            <person name="Galleron N."/>
            <person name="Ghim S.-Y."/>
            <person name="Glaser P."/>
            <person name="Goffeau A."/>
            <person name="Golightly E.J."/>
            <person name="Grandi G."/>
            <person name="Guiseppi G."/>
            <person name="Guy B.J."/>
            <person name="Haga K."/>
            <person name="Haiech J."/>
            <person name="Harwood C.R."/>
            <person name="Henaut A."/>
            <person name="Hilbert H."/>
            <person name="Holsappel S."/>
            <person name="Hosono S."/>
            <person name="Hullo M.-F."/>
            <person name="Itaya M."/>
            <person name="Jones L.-M."/>
            <person name="Joris B."/>
            <person name="Karamata D."/>
            <person name="Kasahara Y."/>
            <person name="Klaerr-Blanchard M."/>
            <person name="Klein C."/>
            <person name="Kobayashi Y."/>
            <person name="Koetter P."/>
            <person name="Koningstein G."/>
            <person name="Krogh S."/>
            <person name="Kumano M."/>
            <person name="Kurita K."/>
            <person name="Lapidus A."/>
            <person name="Lardinois S."/>
            <person name="Lauber J."/>
            <person name="Lazarevic V."/>
            <person name="Lee S.-M."/>
            <person name="Levine A."/>
            <person name="Liu H."/>
            <person name="Masuda S."/>
            <person name="Mauel C."/>
            <person name="Medigue C."/>
            <person name="Medina N."/>
            <person name="Mellado R.P."/>
            <person name="Mizuno M."/>
            <person name="Moestl D."/>
            <person name="Nakai S."/>
            <person name="Noback M."/>
            <person name="Noone D."/>
            <person name="O'Reilly M."/>
            <person name="Ogawa K."/>
            <person name="Ogiwara A."/>
            <person name="Oudega B."/>
            <person name="Park S.-H."/>
            <person name="Parro V."/>
            <person name="Pohl T.M."/>
            <person name="Portetelle D."/>
            <person name="Porwollik S."/>
            <person name="Prescott A.M."/>
            <person name="Presecan E."/>
            <person name="Pujic P."/>
            <person name="Purnelle B."/>
            <person name="Rapoport G."/>
            <person name="Rey M."/>
            <person name="Reynolds S."/>
            <person name="Rieger M."/>
            <person name="Rivolta C."/>
            <person name="Rocha E."/>
            <person name="Roche B."/>
            <person name="Rose M."/>
            <person name="Sadaie Y."/>
            <person name="Sato T."/>
            <person name="Scanlan E."/>
            <person name="Schleich S."/>
            <person name="Schroeter R."/>
            <person name="Scoffone F."/>
            <person name="Sekiguchi J."/>
            <person name="Sekowska A."/>
            <person name="Seror S.J."/>
            <person name="Serror P."/>
            <person name="Shin B.-S."/>
            <person name="Soldo B."/>
            <person name="Sorokin A."/>
            <person name="Tacconi E."/>
            <person name="Takagi T."/>
            <person name="Takahashi H."/>
            <person name="Takemaru K."/>
            <person name="Takeuchi M."/>
            <person name="Tamakoshi A."/>
            <person name="Tanaka T."/>
            <person name="Terpstra P."/>
            <person name="Tognoni A."/>
            <person name="Tosato V."/>
            <person name="Uchiyama S."/>
            <person name="Vandenbol M."/>
            <person name="Vannier F."/>
            <person name="Vassarotti A."/>
            <person name="Viari A."/>
            <person name="Wambutt R."/>
            <person name="Wedler E."/>
            <person name="Wedler H."/>
            <person name="Weitzenegger T."/>
            <person name="Winters P."/>
            <person name="Wipat A."/>
            <person name="Yamamoto H."/>
            <person name="Yamane K."/>
            <person name="Yasumoto K."/>
            <person name="Yata K."/>
            <person name="Yoshida K."/>
            <person name="Yoshikawa H.-F."/>
            <person name="Zumstein E."/>
            <person name="Yoshikawa H."/>
            <person name="Danchin A."/>
        </authorList>
    </citation>
    <scope>NUCLEOTIDE SEQUENCE [LARGE SCALE GENOMIC DNA]</scope>
    <source>
        <strain>168</strain>
    </source>
</reference>
<reference key="4">
    <citation type="journal article" date="1981" name="Biochemistry">
        <title>Kinetic mechanism of Bacillus subtilis L-alanine dehydrogenase.</title>
        <authorList>
            <person name="Grimshaw C.E."/>
            <person name="Cleland W.W."/>
        </authorList>
    </citation>
    <scope>FUNCTION</scope>
    <scope>CATALYTIC ACTIVITY</scope>
    <scope>KINETIC MECHANISM</scope>
</reference>
<reference key="5">
    <citation type="journal article" date="1981" name="Biochemistry">
        <title>Use of isotope effects and pH studies to determine the chemical mechanism of Bacillus subtilis L-alanine dehydrogenase.</title>
        <authorList>
            <person name="Grimshaw C.E."/>
            <person name="Cook P.F."/>
            <person name="Cleland W.W."/>
        </authorList>
    </citation>
    <scope>FUNCTION</scope>
    <scope>CATALYTIC ACTIVITY</scope>
    <scope>REACTION MECHANISM</scope>
</reference>
<reference key="6">
    <citation type="journal article" date="2012" name="J. Bacteriol.">
        <title>AdeR, a PucR-type transcription factor, activates expression of L-alanine dehydrogenase and is required for sporulation of Bacillus subtilis.</title>
        <authorList>
            <person name="Lin T.H."/>
            <person name="Wei G.T."/>
            <person name="Su C.C."/>
            <person name="Shaw G.C."/>
        </authorList>
    </citation>
    <scope>INDUCTION</scope>
    <source>
        <strain>168</strain>
    </source>
</reference>
<keyword id="KW-0963">Cytoplasm</keyword>
<keyword id="KW-0520">NAD</keyword>
<keyword id="KW-0547">Nucleotide-binding</keyword>
<keyword id="KW-0560">Oxidoreductase</keyword>
<keyword id="KW-1185">Reference proteome</keyword>
<keyword id="KW-0749">Sporulation</keyword>
<gene>
    <name evidence="9" type="primary">ald</name>
    <name evidence="9" type="synonym">ski22</name>
    <name evidence="9" type="synonym">spoVN</name>
    <name type="ordered locus">BSU31930</name>
</gene>
<evidence type="ECO:0000250" key="1"/>
<evidence type="ECO:0000250" key="2">
    <source>
        <dbReference type="UniProtKB" id="A0QVQ8"/>
    </source>
</evidence>
<evidence type="ECO:0000250" key="3">
    <source>
        <dbReference type="UniProtKB" id="P9WQB1"/>
    </source>
</evidence>
<evidence type="ECO:0000269" key="4">
    <source>
    </source>
</evidence>
<evidence type="ECO:0000269" key="5">
    <source>
    </source>
</evidence>
<evidence type="ECO:0000269" key="6">
    <source>
    </source>
</evidence>
<evidence type="ECO:0000269" key="7">
    <source>
    </source>
</evidence>
<evidence type="ECO:0000303" key="8">
    <source>
    </source>
</evidence>
<evidence type="ECO:0000303" key="9">
    <source>
    </source>
</evidence>
<evidence type="ECO:0000305" key="10"/>
<evidence type="ECO:0000305" key="11">
    <source>
    </source>
</evidence>
<organism>
    <name type="scientific">Bacillus subtilis (strain 168)</name>
    <dbReference type="NCBI Taxonomy" id="224308"/>
    <lineage>
        <taxon>Bacteria</taxon>
        <taxon>Bacillati</taxon>
        <taxon>Bacillota</taxon>
        <taxon>Bacilli</taxon>
        <taxon>Bacillales</taxon>
        <taxon>Bacillaceae</taxon>
        <taxon>Bacillus</taxon>
    </lineage>
</organism>
<dbReference type="EC" id="1.4.1.1" evidence="5"/>
<dbReference type="EMBL" id="L20916">
    <property type="protein sequence ID" value="AAA16038.1"/>
    <property type="molecule type" value="Genomic_DNA"/>
</dbReference>
<dbReference type="EMBL" id="Z82015">
    <property type="protein sequence ID" value="CAB04775.1"/>
    <property type="molecule type" value="Genomic_DNA"/>
</dbReference>
<dbReference type="EMBL" id="AL009126">
    <property type="protein sequence ID" value="CAB15181.1"/>
    <property type="molecule type" value="Genomic_DNA"/>
</dbReference>
<dbReference type="PIR" id="A49337">
    <property type="entry name" value="A49337"/>
</dbReference>
<dbReference type="RefSeq" id="NP_391071.1">
    <property type="nucleotide sequence ID" value="NC_000964.3"/>
</dbReference>
<dbReference type="RefSeq" id="WP_003243280.1">
    <property type="nucleotide sequence ID" value="NZ_OZ025638.1"/>
</dbReference>
<dbReference type="SMR" id="Q08352"/>
<dbReference type="FunCoup" id="Q08352">
    <property type="interactions" value="320"/>
</dbReference>
<dbReference type="STRING" id="224308.BSU31930"/>
<dbReference type="jPOST" id="Q08352"/>
<dbReference type="PaxDb" id="224308-BSU31930"/>
<dbReference type="EnsemblBacteria" id="CAB15181">
    <property type="protein sequence ID" value="CAB15181"/>
    <property type="gene ID" value="BSU_31930"/>
</dbReference>
<dbReference type="GeneID" id="936557"/>
<dbReference type="KEGG" id="bsu:BSU31930"/>
<dbReference type="PATRIC" id="fig|224308.179.peg.3459"/>
<dbReference type="eggNOG" id="COG0686">
    <property type="taxonomic scope" value="Bacteria"/>
</dbReference>
<dbReference type="InParanoid" id="Q08352"/>
<dbReference type="OrthoDB" id="9804592at2"/>
<dbReference type="PhylomeDB" id="Q08352"/>
<dbReference type="BioCyc" id="BSUB:BSU31930-MONOMER"/>
<dbReference type="BioCyc" id="MetaCyc:MONOMER-12812"/>
<dbReference type="BRENDA" id="1.4.1.1">
    <property type="organism ID" value="658"/>
</dbReference>
<dbReference type="SABIO-RK" id="Q08352"/>
<dbReference type="UniPathway" id="UPA00527">
    <property type="reaction ID" value="UER00585"/>
</dbReference>
<dbReference type="Proteomes" id="UP000001570">
    <property type="component" value="Chromosome"/>
</dbReference>
<dbReference type="GO" id="GO:0005829">
    <property type="term" value="C:cytosol"/>
    <property type="evidence" value="ECO:0000250"/>
    <property type="project" value="UniProtKB"/>
</dbReference>
<dbReference type="GO" id="GO:0000286">
    <property type="term" value="F:alanine dehydrogenase activity"/>
    <property type="evidence" value="ECO:0000315"/>
    <property type="project" value="UniProtKB"/>
</dbReference>
<dbReference type="GO" id="GO:0000166">
    <property type="term" value="F:nucleotide binding"/>
    <property type="evidence" value="ECO:0007669"/>
    <property type="project" value="UniProtKB-KW"/>
</dbReference>
<dbReference type="GO" id="GO:0006524">
    <property type="term" value="P:alanine catabolic process"/>
    <property type="evidence" value="ECO:0000250"/>
    <property type="project" value="UniProtKB"/>
</dbReference>
<dbReference type="GO" id="GO:0042853">
    <property type="term" value="P:L-alanine catabolic process"/>
    <property type="evidence" value="ECO:0007669"/>
    <property type="project" value="UniProtKB-UniPathway"/>
</dbReference>
<dbReference type="GO" id="GO:0030435">
    <property type="term" value="P:sporulation resulting in formation of a cellular spore"/>
    <property type="evidence" value="ECO:0000315"/>
    <property type="project" value="UniProtKB"/>
</dbReference>
<dbReference type="CDD" id="cd05305">
    <property type="entry name" value="L-AlaDH"/>
    <property type="match status" value="1"/>
</dbReference>
<dbReference type="FunFam" id="3.40.50.720:FF:000049">
    <property type="entry name" value="Alanine dehydrogenase"/>
    <property type="match status" value="1"/>
</dbReference>
<dbReference type="Gene3D" id="3.40.50.720">
    <property type="entry name" value="NAD(P)-binding Rossmann-like Domain"/>
    <property type="match status" value="2"/>
</dbReference>
<dbReference type="InterPro" id="IPR008141">
    <property type="entry name" value="Ala_DH"/>
</dbReference>
<dbReference type="InterPro" id="IPR008143">
    <property type="entry name" value="Ala_DH/PNT_CS2"/>
</dbReference>
<dbReference type="InterPro" id="IPR008142">
    <property type="entry name" value="AlaDH/PNT_CS1"/>
</dbReference>
<dbReference type="InterPro" id="IPR007886">
    <property type="entry name" value="AlaDH/PNT_N"/>
</dbReference>
<dbReference type="InterPro" id="IPR007698">
    <property type="entry name" value="AlaDH/PNT_NAD(H)-bd"/>
</dbReference>
<dbReference type="InterPro" id="IPR036291">
    <property type="entry name" value="NAD(P)-bd_dom_sf"/>
</dbReference>
<dbReference type="NCBIfam" id="TIGR00518">
    <property type="entry name" value="alaDH"/>
    <property type="match status" value="1"/>
</dbReference>
<dbReference type="PANTHER" id="PTHR42795">
    <property type="entry name" value="ALANINE DEHYDROGENASE"/>
    <property type="match status" value="1"/>
</dbReference>
<dbReference type="PANTHER" id="PTHR42795:SF1">
    <property type="entry name" value="ALANINE DEHYDROGENASE"/>
    <property type="match status" value="1"/>
</dbReference>
<dbReference type="Pfam" id="PF01262">
    <property type="entry name" value="AlaDh_PNT_C"/>
    <property type="match status" value="1"/>
</dbReference>
<dbReference type="Pfam" id="PF05222">
    <property type="entry name" value="AlaDh_PNT_N"/>
    <property type="match status" value="1"/>
</dbReference>
<dbReference type="PIRSF" id="PIRSF000183">
    <property type="entry name" value="Alanine_dh"/>
    <property type="match status" value="1"/>
</dbReference>
<dbReference type="SMART" id="SM01002">
    <property type="entry name" value="AlaDh_PNT_C"/>
    <property type="match status" value="1"/>
</dbReference>
<dbReference type="SMART" id="SM01003">
    <property type="entry name" value="AlaDh_PNT_N"/>
    <property type="match status" value="1"/>
</dbReference>
<dbReference type="SUPFAM" id="SSF52283">
    <property type="entry name" value="Formate/glycerate dehydrogenase catalytic domain-like"/>
    <property type="match status" value="1"/>
</dbReference>
<dbReference type="SUPFAM" id="SSF51735">
    <property type="entry name" value="NAD(P)-binding Rossmann-fold domains"/>
    <property type="match status" value="1"/>
</dbReference>
<dbReference type="PROSITE" id="PS00836">
    <property type="entry name" value="ALADH_PNT_1"/>
    <property type="match status" value="1"/>
</dbReference>
<dbReference type="PROSITE" id="PS00837">
    <property type="entry name" value="ALADH_PNT_2"/>
    <property type="match status" value="1"/>
</dbReference>
<sequence>MIIGVPKEIKNNENRVALTPGGVSQLISNGHRVLVETGAGLGSGFENEAYESAGAEIIADPKQVWDAEMVMKVKEPLPEEYVYFRKGLVLFTYLHLAAEPELAQALKDKGVTAIAYETVSEGRTLPLLTPMSEVAGRMAAQIGAQFLEKPKGGKGILLAGVPGVSRGKVTIIGGGVVGTNAAKMAVGLGADVTIIDLNADRLRQLDDIFGHQIKTLISNPVNIADAVAEADLLICAVLIPGAKAPTLVTEEMVKQMKPGSVIVDVAIDQGGIVETVDHITTHDQPTYEKHGVVHYAVANMPGAVPRTSTIALTNVTVPYALQIANKGAVKALADNTALRAGLNTANGHVTYEAVARDLGYEYVPAEKALQDESSVAGA</sequence>